<feature type="chain" id="PRO_0000099133" description="DNA-directed RNA polymerase 35 kDa subunit">
    <location>
        <begin position="1"/>
        <end position="305"/>
    </location>
</feature>
<keyword id="KW-0240">DNA-directed RNA polymerase</keyword>
<keyword id="KW-0548">Nucleotidyltransferase</keyword>
<keyword id="KW-0804">Transcription</keyword>
<keyword id="KW-0808">Transferase</keyword>
<keyword id="KW-0946">Virion</keyword>
<proteinExistence type="inferred from homology"/>
<gene>
    <name type="primary">RPO35</name>
    <name type="ORF">TA38L</name>
</gene>
<evidence type="ECO:0000305" key="1"/>
<name>RP35_VACCT</name>
<dbReference type="EC" id="2.7.7.6"/>
<dbReference type="EMBL" id="AF095689">
    <property type="protein sequence ID" value="AAF34033.1"/>
    <property type="molecule type" value="Genomic_DNA"/>
</dbReference>
<dbReference type="SMR" id="Q77TH6"/>
<dbReference type="Proteomes" id="UP000163220">
    <property type="component" value="Genome"/>
</dbReference>
<dbReference type="GO" id="GO:0000428">
    <property type="term" value="C:DNA-directed RNA polymerase complex"/>
    <property type="evidence" value="ECO:0007669"/>
    <property type="project" value="UniProtKB-KW"/>
</dbReference>
<dbReference type="GO" id="GO:0044423">
    <property type="term" value="C:virion component"/>
    <property type="evidence" value="ECO:0007669"/>
    <property type="project" value="UniProtKB-KW"/>
</dbReference>
<dbReference type="GO" id="GO:0003677">
    <property type="term" value="F:DNA binding"/>
    <property type="evidence" value="ECO:0007669"/>
    <property type="project" value="InterPro"/>
</dbReference>
<dbReference type="GO" id="GO:0003899">
    <property type="term" value="F:DNA-directed RNA polymerase activity"/>
    <property type="evidence" value="ECO:0007669"/>
    <property type="project" value="UniProtKB-EC"/>
</dbReference>
<dbReference type="GO" id="GO:0019083">
    <property type="term" value="P:viral transcription"/>
    <property type="evidence" value="ECO:0007669"/>
    <property type="project" value="InterPro"/>
</dbReference>
<dbReference type="InterPro" id="IPR005059">
    <property type="entry name" value="DNA-dir_RNA_pol_35kDa_poxviral"/>
</dbReference>
<dbReference type="Pfam" id="PF03396">
    <property type="entry name" value="Pox_RNA_pol_35"/>
    <property type="match status" value="1"/>
</dbReference>
<dbReference type="PIRSF" id="PIRSF000746">
    <property type="entry name" value="Rpo35"/>
    <property type="match status" value="1"/>
</dbReference>
<organismHost>
    <name type="scientific">Homo sapiens</name>
    <name type="common">Human</name>
    <dbReference type="NCBI Taxonomy" id="9606"/>
</organismHost>
<sequence length="305" mass="35394">MQHPREENSIVVELEPSLATFIKQGFNNLVKWPLLNIGIVLSNTSTAVNEEWLTAVEHIPTMKIFYKHIHKILTREMGFLVYLKRSQSERDNYITLYDFDYYIIDKDTNSVTMVDKPTELKETLLHVFQEYRLKSSQTIELIAFSSGTVINEDIVSKLTFLDVEVFNREYNNVKTIIDPDFVFRSPFIVISPMGKLTFFVEVYSWFDFKSCFKDIIDFLEGALIANIHNHMIKVGDCDETVSSYNPESGMLFVNDLMTMNIVNFFGCNSRLESYHRFDMTKVDVELFIKALSDACKKILSASNRL</sequence>
<comment type="function">
    <text>Part of the DNA-dependent RNA polymerase which catalyzes the transcription of viral DNA into RNA using the four ribonucleoside triphosphates as substrates. Responsible for the transcription of early, intermediate and late genes. DNA-dependent RNA polymerase associates with the early transcription factor (ETF), itself composed of D6 and A7, thereby allowing the early genes transcription. Late transcription, and probably also intermediate transcription, require newly synthesized RNA polymerase.</text>
</comment>
<comment type="catalytic activity">
    <reaction>
        <text>RNA(n) + a ribonucleoside 5'-triphosphate = RNA(n+1) + diphosphate</text>
        <dbReference type="Rhea" id="RHEA:21248"/>
        <dbReference type="Rhea" id="RHEA-COMP:14527"/>
        <dbReference type="Rhea" id="RHEA-COMP:17342"/>
        <dbReference type="ChEBI" id="CHEBI:33019"/>
        <dbReference type="ChEBI" id="CHEBI:61557"/>
        <dbReference type="ChEBI" id="CHEBI:140395"/>
        <dbReference type="EC" id="2.7.7.6"/>
    </reaction>
</comment>
<comment type="subunit">
    <text>The DNA-dependent RNA polymerase used for intermediate and late genes expression consists of eight subunits 147 kDa, 133 kDa, 35 kDa, 30 kDa, 22 kDa, 19 kDa, 18 kDa and 7 kDa totalling more than 500 kDa in mass. The same holoenzyme, with the addition of the transcription-specificity factor RAP94, is used for early gene expression.</text>
</comment>
<comment type="subcellular location">
    <subcellularLocation>
        <location evidence="1">Virion</location>
    </subcellularLocation>
    <text>All the enzymes and other proteins required to synthesize early mRNAs are packaged within the virion core along with the DNA genome. This is necessary because viral early mRNAs are synthesized within minutes after virus entry into the cell and are extruded through pores in the core particle.</text>
</comment>
<comment type="similarity">
    <text evidence="1">Belongs to the poxviridae DNA-directed RNA polymerase 35 kDa subunit family.</text>
</comment>
<reference key="1">
    <citation type="submission" date="1998-09" db="EMBL/GenBank/DDBJ databases">
        <title>Complete genomic sequence of vaccinia virus (Tian Tan strain).</title>
        <authorList>
            <person name="Jin Q."/>
            <person name="Hou Y.D."/>
            <person name="Cheng N.H."/>
            <person name="Yao E.M."/>
            <person name="Cheng S.X."/>
            <person name="Yang X.K."/>
            <person name="Jing D.Y."/>
            <person name="Yu W.H."/>
            <person name="Yuan J.S."/>
            <person name="Ma X.J."/>
        </authorList>
    </citation>
    <scope>NUCLEOTIDE SEQUENCE [LARGE SCALE GENOMIC DNA]</scope>
</reference>
<reference key="2">
    <citation type="journal article" date="2003" name="J. Gen. Virol.">
        <title>Vaccinia virus transcription.</title>
        <authorList>
            <person name="Broyles S.S."/>
        </authorList>
    </citation>
    <scope>REVIEW</scope>
</reference>
<protein>
    <recommendedName>
        <fullName>DNA-directed RNA polymerase 35 kDa subunit</fullName>
        <ecNumber>2.7.7.6</ecNumber>
    </recommendedName>
</protein>
<organism>
    <name type="scientific">Vaccinia virus (strain Tian Tan)</name>
    <name type="common">VACV</name>
    <dbReference type="NCBI Taxonomy" id="10253"/>
    <lineage>
        <taxon>Viruses</taxon>
        <taxon>Varidnaviria</taxon>
        <taxon>Bamfordvirae</taxon>
        <taxon>Nucleocytoviricota</taxon>
        <taxon>Pokkesviricetes</taxon>
        <taxon>Chitovirales</taxon>
        <taxon>Poxviridae</taxon>
        <taxon>Chordopoxvirinae</taxon>
        <taxon>Orthopoxvirus</taxon>
        <taxon>Vaccinia virus</taxon>
    </lineage>
</organism>
<accession>Q77TH6</accession>